<keyword id="KW-0002">3D-structure</keyword>
<keyword id="KW-0020">Allergen</keyword>
<keyword id="KW-0929">Antimicrobial</keyword>
<keyword id="KW-0963">Cytoplasm</keyword>
<keyword id="KW-0903">Direct protein sequencing</keyword>
<keyword id="KW-1015">Disulfide bond</keyword>
<keyword id="KW-0295">Fungicide</keyword>
<keyword id="KW-0326">Glycosidase</keyword>
<keyword id="KW-0378">Hydrolase</keyword>
<keyword id="KW-0568">Pathogenesis-related protein</keyword>
<keyword id="KW-0611">Plant defense</keyword>
<keyword id="KW-1185">Reference proteome</keyword>
<keyword id="KW-0732">Signal</keyword>
<keyword id="KW-0346">Stress response</keyword>
<keyword id="KW-0926">Vacuole</keyword>
<feature type="signal peptide" evidence="5">
    <location>
        <begin position="1"/>
        <end position="21"/>
    </location>
</feature>
<feature type="chain" id="PRO_0000034044" description="Osmotin-like protein NP24-I">
    <location>
        <begin position="22"/>
        <end position="247"/>
    </location>
</feature>
<feature type="disulfide bond" evidence="1 4 14">
    <location>
        <begin position="30"/>
        <end position="225"/>
    </location>
</feature>
<feature type="disulfide bond" evidence="1 4 14">
    <location>
        <begin position="72"/>
        <end position="82"/>
    </location>
</feature>
<feature type="disulfide bond" evidence="1 4 14">
    <location>
        <begin position="87"/>
        <end position="93"/>
    </location>
</feature>
<feature type="disulfide bond" evidence="1 4 14">
    <location>
        <begin position="141"/>
        <end position="213"/>
    </location>
</feature>
<feature type="disulfide bond" evidence="1 4 14">
    <location>
        <begin position="146"/>
        <end position="196"/>
    </location>
</feature>
<feature type="disulfide bond" evidence="1 4 14">
    <location>
        <begin position="154"/>
        <end position="164"/>
    </location>
</feature>
<feature type="disulfide bond" evidence="1 4 14">
    <location>
        <begin position="168"/>
        <end position="177"/>
    </location>
</feature>
<feature type="disulfide bond" evidence="1 4 14">
    <location>
        <begin position="178"/>
        <end position="183"/>
    </location>
</feature>
<feature type="sequence variant" description="In strain: cv. Rutgers and NP24 II." evidence="5">
    <original>I</original>
    <variation>F</variation>
    <location>
        <position position="24"/>
    </location>
</feature>
<feature type="sequence variant" description="In NP24 II." evidence="5">
    <original>S</original>
    <variation>F</variation>
    <location>
        <position position="38"/>
    </location>
</feature>
<feature type="strand" evidence="15">
    <location>
        <begin position="23"/>
        <end position="28"/>
    </location>
</feature>
<feature type="strand" evidence="15">
    <location>
        <begin position="30"/>
        <end position="32"/>
    </location>
</feature>
<feature type="strand" evidence="15">
    <location>
        <begin position="34"/>
        <end position="39"/>
    </location>
</feature>
<feature type="turn" evidence="15">
    <location>
        <begin position="40"/>
        <end position="42"/>
    </location>
</feature>
<feature type="strand" evidence="15">
    <location>
        <begin position="43"/>
        <end position="47"/>
    </location>
</feature>
<feature type="strand" evidence="15">
    <location>
        <begin position="52"/>
        <end position="56"/>
    </location>
</feature>
<feature type="strand" evidence="15">
    <location>
        <begin position="63"/>
        <end position="71"/>
    </location>
</feature>
<feature type="strand" evidence="15">
    <location>
        <begin position="73"/>
        <end position="75"/>
    </location>
</feature>
<feature type="turn" evidence="15">
    <location>
        <begin position="76"/>
        <end position="78"/>
    </location>
</feature>
<feature type="strand" evidence="15">
    <location>
        <begin position="79"/>
        <end position="81"/>
    </location>
</feature>
<feature type="strand" evidence="15">
    <location>
        <begin position="83"/>
        <end position="85"/>
    </location>
</feature>
<feature type="strand" evidence="15">
    <location>
        <begin position="88"/>
        <end position="92"/>
    </location>
</feature>
<feature type="strand" evidence="15">
    <location>
        <begin position="103"/>
        <end position="109"/>
    </location>
</feature>
<feature type="turn" evidence="15">
    <location>
        <begin position="110"/>
        <end position="113"/>
    </location>
</feature>
<feature type="strand" evidence="15">
    <location>
        <begin position="114"/>
        <end position="120"/>
    </location>
</feature>
<feature type="strand" evidence="15">
    <location>
        <begin position="125"/>
        <end position="127"/>
    </location>
</feature>
<feature type="strand" evidence="15">
    <location>
        <begin position="129"/>
        <end position="135"/>
    </location>
</feature>
<feature type="strand" evidence="15">
    <location>
        <begin position="144"/>
        <end position="146"/>
    </location>
</feature>
<feature type="helix" evidence="15">
    <location>
        <begin position="150"/>
        <end position="153"/>
    </location>
</feature>
<feature type="turn" evidence="15">
    <location>
        <begin position="156"/>
        <end position="158"/>
    </location>
</feature>
<feature type="helix" evidence="15">
    <location>
        <begin position="167"/>
        <end position="170"/>
    </location>
</feature>
<feature type="helix" evidence="15">
    <location>
        <begin position="174"/>
        <end position="177"/>
    </location>
</feature>
<feature type="helix" evidence="15">
    <location>
        <begin position="189"/>
        <end position="195"/>
    </location>
</feature>
<feature type="strand" evidence="15">
    <location>
        <begin position="199"/>
        <end position="202"/>
    </location>
</feature>
<feature type="turn" evidence="15">
    <location>
        <begin position="207"/>
        <end position="209"/>
    </location>
</feature>
<feature type="strand" evidence="15">
    <location>
        <begin position="211"/>
        <end position="214"/>
    </location>
</feature>
<feature type="strand" evidence="15">
    <location>
        <begin position="220"/>
        <end position="225"/>
    </location>
</feature>
<organism>
    <name type="scientific">Solanum lycopersicum</name>
    <name type="common">Tomato</name>
    <name type="synonym">Lycopersicon esculentum</name>
    <dbReference type="NCBI Taxonomy" id="4081"/>
    <lineage>
        <taxon>Eukaryota</taxon>
        <taxon>Viridiplantae</taxon>
        <taxon>Streptophyta</taxon>
        <taxon>Embryophyta</taxon>
        <taxon>Tracheophyta</taxon>
        <taxon>Spermatophyta</taxon>
        <taxon>Magnoliopsida</taxon>
        <taxon>eudicotyledons</taxon>
        <taxon>Gunneridae</taxon>
        <taxon>Pentapetalae</taxon>
        <taxon>asterids</taxon>
        <taxon>lamiids</taxon>
        <taxon>Solanales</taxon>
        <taxon>Solanaceae</taxon>
        <taxon>Solanoideae</taxon>
        <taxon>Solaneae</taxon>
        <taxon>Solanum</taxon>
        <taxon>Solanum subgen. Lycopersicon</taxon>
    </lineage>
</organism>
<gene>
    <name evidence="8 9 10" type="primary">NP24-I</name>
    <name evidence="12" type="ordered locus">Solyc08g080650</name>
</gene>
<sequence length="247" mass="26646">MGYLTSSFVLFFLLCVTYTYAATIEVRNNCPYTVWAASTPIGGGRRLNRGQTWVINAPRGTKMARIWGRTGCNFNAAGRGTCQTGDCGGVLQCTGWGKPPNTLAEYALDQFSNLDFWDISLVDGFNIPMTFAPTKPSGGKCHAIHCTANINGECPRALKVPGGCNNPCTTFGGQQYCCTQGPCGPTELSKFFKKRCPDAYSYPQDDPTSTFTCPGGSTNYRVVFCPNGVADPNFPLEMPASTDEVAK</sequence>
<protein>
    <recommendedName>
        <fullName evidence="8 9 10">Osmotin-like protein NP24-I</fullName>
    </recommendedName>
    <alternativeName>
        <fullName evidence="7">Endo-beta-1,3-D-glucanase NP24-I</fullName>
        <ecNumber evidence="2">3.2.1.6</ecNumber>
    </alternativeName>
    <alternativeName>
        <fullName evidence="8">Pathogenesis-related protein PR P23</fullName>
    </alternativeName>
    <alternativeName>
        <fullName evidence="11">Salt-induced protein NP24-I</fullName>
    </alternativeName>
</protein>
<proteinExistence type="evidence at protein level"/>
<name>NP24_SOLLC</name>
<reference key="1">
    <citation type="submission" date="1998-09" db="EMBL/GenBank/DDBJ databases">
        <title>Rapid transcript accumulation of pathogenesis-related genes during an incompatible interaction in bacterial speck disease resistant tomato plants.</title>
        <authorList>
            <person name="Martin G.B."/>
            <person name="Jia Y."/>
        </authorList>
    </citation>
    <scope>NUCLEOTIDE SEQUENCE [GENOMIC DNA]</scope>
    <source>
        <strain>cv. Ailsa Craig</strain>
    </source>
</reference>
<reference key="2">
    <citation type="journal article" date="2012" name="Nature">
        <title>The tomato genome sequence provides insights into fleshy fruit evolution.</title>
        <authorList>
            <consortium name="Tomato Genome Consortium"/>
        </authorList>
    </citation>
    <scope>NUCLEOTIDE SEQUENCE [LARGE SCALE GENOMIC DNA]</scope>
    <source>
        <strain>cv. Heinz 1706</strain>
    </source>
</reference>
<reference key="3">
    <citation type="journal article" date="1988" name="Plant Mol. Biol.">
        <title>Isolation and characterization of a tomato cDNA clone which codes for a salt-induced protein.</title>
        <authorList>
            <person name="King G.J."/>
            <person name="Turner V.A."/>
            <person name="Hussey C.E. Jr."/>
            <person name="Wurtele E.S."/>
            <person name="Lee S.M."/>
        </authorList>
        <dbReference type="AGRICOLA" id="IND92000607"/>
    </citation>
    <scope>NUCLEOTIDE SEQUENCE OF 9-247</scope>
    <scope>PARTIAL PROTEIN SEQUENCE</scope>
    <scope>INDUCTION BY SALT</scope>
    <scope>SUBCELLULAR LOCATION</scope>
    <source>
        <strain>cv. VFNT Cherry</strain>
        <tissue>Root</tissue>
    </source>
</reference>
<reference key="4">
    <citation type="journal article" date="1991" name="Plant Mol. Biol.">
        <title>Identification of the viroid-induced tomato pathogenesis-related (PR) protein P23 as the thaumatin-like tomato protein NP24 associated with osmotic stress.</title>
        <authorList>
            <person name="Rodrigo I."/>
            <person name="Vera P."/>
            <person name="Frank R."/>
            <person name="Conejero V."/>
        </authorList>
    </citation>
    <scope>PARTIAL PROTEIN SEQUENCE</scope>
    <scope>INDUCTION BY VIROIDS</scope>
    <source>
        <strain>cv. Rutgers</strain>
        <tissue>Leaf</tissue>
    </source>
</reference>
<reference key="5">
    <citation type="journal article" date="1997" name="Phytochemistry">
        <title>Two isoforms of NP24: a thaumatin-like protein in tomato fruit.</title>
        <authorList>
            <person name="Pressey R."/>
        </authorList>
    </citation>
    <scope>PROTEIN SEQUENCE OF 22-46</scope>
    <scope>FUNCTION</scope>
    <scope>TISSUE SPECIFICITY</scope>
    <scope>DEVELOPMENTAL STAGE</scope>
    <scope>VARIANTS NP24 II PHE-24 AND PHE-38</scope>
    <source>
        <strain>cv. Better Boy</strain>
        <tissue>Pericarp</tissue>
    </source>
</reference>
<reference key="6">
    <citation type="journal article" date="1999" name="Plant J.">
        <title>Some thaumatin-like proteins hydrolyse polymeric beta-1,3-glucans.</title>
        <authorList>
            <person name="Grenier J."/>
            <person name="Potvin C."/>
            <person name="Trudel J."/>
            <person name="Asselin A."/>
        </authorList>
    </citation>
    <scope>FUNCTION</scope>
    <scope>CATALYTIC ACTIVITY</scope>
    <scope>SUBCELLULAR LOCATION</scope>
</reference>
<reference key="7">
    <citation type="journal article" date="2008" name="Planta">
        <title>Crystal structure analysis of NP24-I: a thaumatin-like protein.</title>
        <authorList>
            <person name="Ghosh R."/>
            <person name="Chakrabarti C."/>
        </authorList>
    </citation>
    <scope>X-RAY CRYSTALLOGRAPHY (2.50 ANGSTROMS) OF 22-228</scope>
    <scope>DISULFIDE BONDS</scope>
    <scope>FUNCTION</scope>
    <source>
        <tissue>Fruit</tissue>
    </source>
</reference>
<evidence type="ECO:0000255" key="1">
    <source>
        <dbReference type="PROSITE-ProRule" id="PRU00699"/>
    </source>
</evidence>
<evidence type="ECO:0000269" key="2">
    <source>
    </source>
</evidence>
<evidence type="ECO:0000269" key="3">
    <source>
    </source>
</evidence>
<evidence type="ECO:0000269" key="4">
    <source>
    </source>
</evidence>
<evidence type="ECO:0000269" key="5">
    <source>
    </source>
</evidence>
<evidence type="ECO:0000269" key="6">
    <source ref="3"/>
</evidence>
<evidence type="ECO:0000303" key="7">
    <source>
    </source>
</evidence>
<evidence type="ECO:0000303" key="8">
    <source>
    </source>
</evidence>
<evidence type="ECO:0000303" key="9">
    <source>
    </source>
</evidence>
<evidence type="ECO:0000303" key="10">
    <source ref="1"/>
</evidence>
<evidence type="ECO:0000303" key="11">
    <source ref="3"/>
</evidence>
<evidence type="ECO:0000305" key="12"/>
<evidence type="ECO:0000305" key="13">
    <source>
    </source>
</evidence>
<evidence type="ECO:0007744" key="14">
    <source>
        <dbReference type="PDB" id="2I0W"/>
    </source>
</evidence>
<evidence type="ECO:0007829" key="15">
    <source>
        <dbReference type="PDB" id="2I0W"/>
    </source>
</evidence>
<accession>P12670</accession>
<accession>A0A3Q7HVV0</accession>
<dbReference type="EC" id="3.2.1.6" evidence="2"/>
<dbReference type="EMBL" id="AF093743">
    <property type="protein sequence ID" value="AAC64171.1"/>
    <property type="molecule type" value="Genomic_DNA"/>
</dbReference>
<dbReference type="EMBL" id="M21346">
    <property type="protein sequence ID" value="AAA34175.1"/>
    <property type="molecule type" value="mRNA"/>
</dbReference>
<dbReference type="PIR" id="S07406">
    <property type="entry name" value="S07406"/>
</dbReference>
<dbReference type="PIR" id="S16264">
    <property type="entry name" value="S16264"/>
</dbReference>
<dbReference type="RefSeq" id="NP_001292922.1">
    <property type="nucleotide sequence ID" value="NM_001305993.1"/>
</dbReference>
<dbReference type="PDB" id="2I0W">
    <property type="method" value="X-ray"/>
    <property type="resolution" value="2.50 A"/>
    <property type="chains" value="A=22-228"/>
</dbReference>
<dbReference type="PDBsum" id="2I0W"/>
<dbReference type="SMR" id="P12670"/>
<dbReference type="FunCoup" id="P12670">
    <property type="interactions" value="43"/>
</dbReference>
<dbReference type="STRING" id="4081.P12670"/>
<dbReference type="Allergome" id="9063">
    <property type="allergen name" value="Sola l TLP"/>
</dbReference>
<dbReference type="PaxDb" id="4081-Solyc08g080640.1.1"/>
<dbReference type="GeneID" id="543979"/>
<dbReference type="KEGG" id="sly:543979"/>
<dbReference type="eggNOG" id="ENOG502QV4N">
    <property type="taxonomic scope" value="Eukaryota"/>
</dbReference>
<dbReference type="HOGENOM" id="CLU_043181_5_0_1"/>
<dbReference type="InParanoid" id="P12670"/>
<dbReference type="OrthoDB" id="430315at2759"/>
<dbReference type="PhylomeDB" id="P12670"/>
<dbReference type="EvolutionaryTrace" id="P12670"/>
<dbReference type="Proteomes" id="UP000004994">
    <property type="component" value="Chromosome 8"/>
</dbReference>
<dbReference type="ExpressionAtlas" id="P12670">
    <property type="expression patterns" value="baseline and differential"/>
</dbReference>
<dbReference type="GO" id="GO:0005737">
    <property type="term" value="C:cytoplasm"/>
    <property type="evidence" value="ECO:0000314"/>
    <property type="project" value="UniProtKB"/>
</dbReference>
<dbReference type="GO" id="GO:0005773">
    <property type="term" value="C:vacuole"/>
    <property type="evidence" value="ECO:0000314"/>
    <property type="project" value="UniProtKB"/>
</dbReference>
<dbReference type="GO" id="GO:0052736">
    <property type="term" value="F:beta-glucanase activity"/>
    <property type="evidence" value="ECO:0000314"/>
    <property type="project" value="UniProtKB"/>
</dbReference>
<dbReference type="GO" id="GO:0061760">
    <property type="term" value="P:antifungal innate immune response"/>
    <property type="evidence" value="ECO:0000314"/>
    <property type="project" value="UniProtKB"/>
</dbReference>
<dbReference type="GO" id="GO:0006952">
    <property type="term" value="P:defense response"/>
    <property type="evidence" value="ECO:0000318"/>
    <property type="project" value="GO_Central"/>
</dbReference>
<dbReference type="GO" id="GO:0031640">
    <property type="term" value="P:killing of cells of another organism"/>
    <property type="evidence" value="ECO:0007669"/>
    <property type="project" value="UniProtKB-KW"/>
</dbReference>
<dbReference type="GO" id="GO:0009651">
    <property type="term" value="P:response to salt stress"/>
    <property type="evidence" value="ECO:0000270"/>
    <property type="project" value="UniProtKB"/>
</dbReference>
<dbReference type="GO" id="GO:0009615">
    <property type="term" value="P:response to virus"/>
    <property type="evidence" value="ECO:0000270"/>
    <property type="project" value="UniProtKB"/>
</dbReference>
<dbReference type="CDD" id="cd09217">
    <property type="entry name" value="TLP-P"/>
    <property type="match status" value="1"/>
</dbReference>
<dbReference type="FunFam" id="2.60.110.10:FF:000003">
    <property type="entry name" value="Thaumatin I"/>
    <property type="match status" value="1"/>
</dbReference>
<dbReference type="Gene3D" id="2.60.110.10">
    <property type="entry name" value="Thaumatin"/>
    <property type="match status" value="1"/>
</dbReference>
<dbReference type="InterPro" id="IPR037176">
    <property type="entry name" value="Osmotin/thaumatin-like_sf"/>
</dbReference>
<dbReference type="InterPro" id="IPR001938">
    <property type="entry name" value="Thaumatin"/>
</dbReference>
<dbReference type="InterPro" id="IPR017949">
    <property type="entry name" value="Thaumatin_CS"/>
</dbReference>
<dbReference type="PANTHER" id="PTHR31048">
    <property type="entry name" value="OS03G0233200 PROTEIN"/>
    <property type="match status" value="1"/>
</dbReference>
<dbReference type="Pfam" id="PF00314">
    <property type="entry name" value="Thaumatin"/>
    <property type="match status" value="1"/>
</dbReference>
<dbReference type="PIRSF" id="PIRSF002703">
    <property type="entry name" value="Thaumatin"/>
    <property type="match status" value="1"/>
</dbReference>
<dbReference type="PRINTS" id="PR00347">
    <property type="entry name" value="THAUMATIN"/>
</dbReference>
<dbReference type="SMART" id="SM00205">
    <property type="entry name" value="THN"/>
    <property type="match status" value="1"/>
</dbReference>
<dbReference type="SUPFAM" id="SSF49870">
    <property type="entry name" value="Osmotin, thaumatin-like protein"/>
    <property type="match status" value="1"/>
</dbReference>
<dbReference type="PROSITE" id="PS00316">
    <property type="entry name" value="THAUMATIN_1"/>
    <property type="match status" value="1"/>
</dbReference>
<dbReference type="PROSITE" id="PS51367">
    <property type="entry name" value="THAUMATIN_2"/>
    <property type="match status" value="1"/>
</dbReference>
<comment type="function">
    <text evidence="2 5 13">Has antifungal activity against P.betae and F.dahliae (PubMed:9115696). May be involved in disease resistance in tomatoes and/or have a possible role in fruit development and ripening (PubMed:9115696). Binds to beta-glucans and exhibits beta-1,3-D-glucanase activity (Probable) (PubMed:10504569).</text>
</comment>
<comment type="catalytic activity">
    <reaction evidence="2">
        <text>Endohydrolysis of (1-&gt;3)- or (1-&gt;4)-linkages in beta-D-glucans when the glucose residue whose reducing group is involved in the linkage to be hydrolyzed is itself substituted at C-3.</text>
        <dbReference type="EC" id="3.2.1.6"/>
    </reaction>
</comment>
<comment type="subcellular location">
    <subcellularLocation>
        <location evidence="6">Cytoplasm</location>
    </subcellularLocation>
    <subcellularLocation>
        <location evidence="7">Vacuole</location>
    </subcellularLocation>
    <text evidence="6">Or soluble fractions of cytoplasmic organelles, except mitochondria and plastids.</text>
</comment>
<comment type="tissue specificity">
    <text evidence="5">Highest levels of both isoforms found in the outer pericarp, with smaller amounts in the inner pericarp.</text>
</comment>
<comment type="developmental stage">
    <text evidence="5">NP24 I is low in green tomatoes and it increased substantially during ripening, with the largest increase occurring between the pink and red stages. NP24 II is relatively high in green tomatoes and it increased somewhat as the fruit turned pink, but not during further ripening.</text>
</comment>
<comment type="induction">
    <text evidence="3 6">By salt stress or by viroids (at protein level).</text>
</comment>
<comment type="allergen">
    <text evidence="13">Probably allergenic.</text>
</comment>
<comment type="similarity">
    <text evidence="1">Belongs to the thaumatin family.</text>
</comment>